<keyword id="KW-0963">Cytoplasm</keyword>
<keyword id="KW-0489">Methyltransferase</keyword>
<keyword id="KW-0545">Nucleotide biosynthesis</keyword>
<keyword id="KW-0808">Transferase</keyword>
<accession>B8D7X0</accession>
<dbReference type="EC" id="2.1.1.45" evidence="1"/>
<dbReference type="EMBL" id="CP001158">
    <property type="protein sequence ID" value="ACL30235.1"/>
    <property type="molecule type" value="Genomic_DNA"/>
</dbReference>
<dbReference type="RefSeq" id="WP_012619549.1">
    <property type="nucleotide sequence ID" value="NC_011834.1"/>
</dbReference>
<dbReference type="SMR" id="B8D7X0"/>
<dbReference type="KEGG" id="bau:BUAPTUC7_434"/>
<dbReference type="HOGENOM" id="CLU_021669_0_0_6"/>
<dbReference type="UniPathway" id="UPA00575"/>
<dbReference type="GO" id="GO:0005829">
    <property type="term" value="C:cytosol"/>
    <property type="evidence" value="ECO:0007669"/>
    <property type="project" value="TreeGrafter"/>
</dbReference>
<dbReference type="GO" id="GO:0004799">
    <property type="term" value="F:thymidylate synthase activity"/>
    <property type="evidence" value="ECO:0007669"/>
    <property type="project" value="UniProtKB-UniRule"/>
</dbReference>
<dbReference type="GO" id="GO:0006231">
    <property type="term" value="P:dTMP biosynthetic process"/>
    <property type="evidence" value="ECO:0007669"/>
    <property type="project" value="UniProtKB-UniRule"/>
</dbReference>
<dbReference type="GO" id="GO:0006235">
    <property type="term" value="P:dTTP biosynthetic process"/>
    <property type="evidence" value="ECO:0007669"/>
    <property type="project" value="UniProtKB-UniRule"/>
</dbReference>
<dbReference type="GO" id="GO:0032259">
    <property type="term" value="P:methylation"/>
    <property type="evidence" value="ECO:0007669"/>
    <property type="project" value="UniProtKB-KW"/>
</dbReference>
<dbReference type="CDD" id="cd00351">
    <property type="entry name" value="TS_Pyrimidine_HMase"/>
    <property type="match status" value="1"/>
</dbReference>
<dbReference type="FunFam" id="3.30.572.10:FF:000013">
    <property type="entry name" value="Thymidylate synthase"/>
    <property type="match status" value="1"/>
</dbReference>
<dbReference type="Gene3D" id="3.30.572.10">
    <property type="entry name" value="Thymidylate synthase/dCMP hydroxymethylase domain"/>
    <property type="match status" value="1"/>
</dbReference>
<dbReference type="HAMAP" id="MF_00008">
    <property type="entry name" value="Thymidy_synth_bact"/>
    <property type="match status" value="1"/>
</dbReference>
<dbReference type="InterPro" id="IPR045097">
    <property type="entry name" value="Thymidate_synth/dCMP_Mease"/>
</dbReference>
<dbReference type="InterPro" id="IPR023451">
    <property type="entry name" value="Thymidate_synth/dCMP_Mease_dom"/>
</dbReference>
<dbReference type="InterPro" id="IPR036926">
    <property type="entry name" value="Thymidate_synth/dCMP_Mease_sf"/>
</dbReference>
<dbReference type="InterPro" id="IPR000398">
    <property type="entry name" value="Thymidylate_synthase"/>
</dbReference>
<dbReference type="InterPro" id="IPR020940">
    <property type="entry name" value="Thymidylate_synthase_AS"/>
</dbReference>
<dbReference type="NCBIfam" id="NF002497">
    <property type="entry name" value="PRK01827.1-3"/>
    <property type="match status" value="1"/>
</dbReference>
<dbReference type="NCBIfam" id="NF002499">
    <property type="entry name" value="PRK01827.1-5"/>
    <property type="match status" value="1"/>
</dbReference>
<dbReference type="NCBIfam" id="TIGR03284">
    <property type="entry name" value="thym_sym"/>
    <property type="match status" value="2"/>
</dbReference>
<dbReference type="PANTHER" id="PTHR11548:SF9">
    <property type="entry name" value="THYMIDYLATE SYNTHASE"/>
    <property type="match status" value="1"/>
</dbReference>
<dbReference type="PANTHER" id="PTHR11548">
    <property type="entry name" value="THYMIDYLATE SYNTHASE 1"/>
    <property type="match status" value="1"/>
</dbReference>
<dbReference type="Pfam" id="PF00303">
    <property type="entry name" value="Thymidylat_synt"/>
    <property type="match status" value="1"/>
</dbReference>
<dbReference type="PRINTS" id="PR00108">
    <property type="entry name" value="THYMDSNTHASE"/>
</dbReference>
<dbReference type="SUPFAM" id="SSF55831">
    <property type="entry name" value="Thymidylate synthase/dCMP hydroxymethylase"/>
    <property type="match status" value="1"/>
</dbReference>
<dbReference type="PROSITE" id="PS00091">
    <property type="entry name" value="THYMIDYLATE_SYNTHASE"/>
    <property type="match status" value="1"/>
</dbReference>
<sequence>MKQYIKLIKKIIRVGNQKKDRTGTGTLSIFGYNMKFDLKKGFPLLTTKKCHIASIIYELLWFLKGDTNIAYLNENKISIWNNWANESGDVGPIYGKQWRNWSTPEGHEIDQIKNVLIQLKKNPDSRRMLVSSWNVGDIDKMRLPPCHVLFQFYVFNNTLSCQLYQRSCDVFLGLPFNIASYSILIHMIAQQCDLKVGDFLWTGGDVHLYNNHIELAKKQILRIPRTLPKLTILKKPQSLFQYCFEDFKIIGYHPYPAIKGEISI</sequence>
<protein>
    <recommendedName>
        <fullName evidence="1">Thymidylate synthase</fullName>
        <shortName evidence="1">TS</shortName>
        <shortName evidence="1">TSase</shortName>
        <ecNumber evidence="1">2.1.1.45</ecNumber>
    </recommendedName>
</protein>
<evidence type="ECO:0000255" key="1">
    <source>
        <dbReference type="HAMAP-Rule" id="MF_00008"/>
    </source>
</evidence>
<comment type="function">
    <text evidence="1">Catalyzes the reductive methylation of 2'-deoxyuridine-5'-monophosphate (dUMP) to 2'-deoxythymidine-5'-monophosphate (dTMP) while utilizing 5,10-methylenetetrahydrofolate (mTHF) as the methyl donor and reductant in the reaction, yielding dihydrofolate (DHF) as a by-product. This enzymatic reaction provides an intracellular de novo source of dTMP, an essential precursor for DNA biosynthesis.</text>
</comment>
<comment type="catalytic activity">
    <reaction evidence="1">
        <text>dUMP + (6R)-5,10-methylene-5,6,7,8-tetrahydrofolate = 7,8-dihydrofolate + dTMP</text>
        <dbReference type="Rhea" id="RHEA:12104"/>
        <dbReference type="ChEBI" id="CHEBI:15636"/>
        <dbReference type="ChEBI" id="CHEBI:57451"/>
        <dbReference type="ChEBI" id="CHEBI:63528"/>
        <dbReference type="ChEBI" id="CHEBI:246422"/>
        <dbReference type="EC" id="2.1.1.45"/>
    </reaction>
</comment>
<comment type="pathway">
    <text evidence="1">Pyrimidine metabolism; dTTP biosynthesis.</text>
</comment>
<comment type="subunit">
    <text evidence="1">Homodimer.</text>
</comment>
<comment type="subcellular location">
    <subcellularLocation>
        <location evidence="1">Cytoplasm</location>
    </subcellularLocation>
</comment>
<comment type="similarity">
    <text evidence="1">Belongs to the thymidylate synthase family. Bacterial-type ThyA subfamily.</text>
</comment>
<organism>
    <name type="scientific">Buchnera aphidicola subsp. Acyrthosiphon pisum (strain Tuc7)</name>
    <dbReference type="NCBI Taxonomy" id="561501"/>
    <lineage>
        <taxon>Bacteria</taxon>
        <taxon>Pseudomonadati</taxon>
        <taxon>Pseudomonadota</taxon>
        <taxon>Gammaproteobacteria</taxon>
        <taxon>Enterobacterales</taxon>
        <taxon>Erwiniaceae</taxon>
        <taxon>Buchnera</taxon>
    </lineage>
</organism>
<gene>
    <name evidence="1" type="primary">thyA</name>
    <name type="ordered locus">BUAPTUC7_434</name>
</gene>
<name>TYSY_BUCAT</name>
<reference key="1">
    <citation type="journal article" date="2009" name="Science">
        <title>The dynamics and time scale of ongoing genomic erosion in symbiotic bacteria.</title>
        <authorList>
            <person name="Moran N.A."/>
            <person name="McLaughlin H.J."/>
            <person name="Sorek R."/>
        </authorList>
    </citation>
    <scope>NUCLEOTIDE SEQUENCE [LARGE SCALE GENOMIC DNA]</scope>
    <source>
        <strain>Tuc7</strain>
    </source>
</reference>
<feature type="chain" id="PRO_1000197237" description="Thymidylate synthase">
    <location>
        <begin position="1"/>
        <end position="264"/>
    </location>
</feature>
<feature type="active site" description="Nucleophile" evidence="1">
    <location>
        <position position="146"/>
    </location>
</feature>
<feature type="binding site" description="in other chain" evidence="1">
    <location>
        <position position="21"/>
    </location>
    <ligand>
        <name>dUMP</name>
        <dbReference type="ChEBI" id="CHEBI:246422"/>
        <note>ligand shared between dimeric partners</note>
    </ligand>
</feature>
<feature type="binding site" evidence="1">
    <location>
        <position position="51"/>
    </location>
    <ligand>
        <name>(6R)-5,10-methylene-5,6,7,8-tetrahydrofolate</name>
        <dbReference type="ChEBI" id="CHEBI:15636"/>
    </ligand>
</feature>
<feature type="binding site" evidence="1">
    <location>
        <begin position="126"/>
        <end position="127"/>
    </location>
    <ligand>
        <name>dUMP</name>
        <dbReference type="ChEBI" id="CHEBI:246422"/>
        <note>ligand shared between dimeric partners</note>
    </ligand>
</feature>
<feature type="binding site" description="in other chain" evidence="1">
    <location>
        <begin position="166"/>
        <end position="169"/>
    </location>
    <ligand>
        <name>dUMP</name>
        <dbReference type="ChEBI" id="CHEBI:246422"/>
        <note>ligand shared between dimeric partners</note>
    </ligand>
</feature>
<feature type="binding site" evidence="1">
    <location>
        <position position="169"/>
    </location>
    <ligand>
        <name>(6R)-5,10-methylene-5,6,7,8-tetrahydrofolate</name>
        <dbReference type="ChEBI" id="CHEBI:15636"/>
    </ligand>
</feature>
<feature type="binding site" description="in other chain" evidence="1">
    <location>
        <position position="177"/>
    </location>
    <ligand>
        <name>dUMP</name>
        <dbReference type="ChEBI" id="CHEBI:246422"/>
        <note>ligand shared between dimeric partners</note>
    </ligand>
</feature>
<feature type="binding site" description="in other chain" evidence="1">
    <location>
        <begin position="207"/>
        <end position="209"/>
    </location>
    <ligand>
        <name>dUMP</name>
        <dbReference type="ChEBI" id="CHEBI:246422"/>
        <note>ligand shared between dimeric partners</note>
    </ligand>
</feature>
<feature type="binding site" evidence="1">
    <location>
        <position position="263"/>
    </location>
    <ligand>
        <name>(6R)-5,10-methylene-5,6,7,8-tetrahydrofolate</name>
        <dbReference type="ChEBI" id="CHEBI:15636"/>
    </ligand>
</feature>
<proteinExistence type="inferred from homology"/>